<sequence length="323" mass="34812">MPADHIPALALAGPTASGKTAAAFAIADALAPRLPVEIISVDSALVYRGMDIGTAKPTPAEQARVPHHLIDIRDPLQAYSAAEFVQDATRLIGEIRARGALPLLVGGTMLYFKALFDGIDDMPPADAAVRARLEAQAAAIGWSGMHAELARVDPPTAARLAPGDSQRIQRALEVWHVSGRPLSSFHTTKTVAASDRPMSAASLFSLEPHDRAWLHGRIAERFHAMLAAGFLDEVLRLRARGDLHAELPSMRCVGYRQAWESLDGLYPMSSLPERGIAATRQLAKRQITWLRSMPQRHSIACDAPDATAQLVQAVRARVWGGSA</sequence>
<reference key="1">
    <citation type="submission" date="2006-12" db="EMBL/GenBank/DDBJ databases">
        <title>Complete sequence of chromosome 1 of Acidovorax sp. JS42.</title>
        <authorList>
            <person name="Copeland A."/>
            <person name="Lucas S."/>
            <person name="Lapidus A."/>
            <person name="Barry K."/>
            <person name="Detter J.C."/>
            <person name="Glavina del Rio T."/>
            <person name="Dalin E."/>
            <person name="Tice H."/>
            <person name="Pitluck S."/>
            <person name="Chertkov O."/>
            <person name="Brettin T."/>
            <person name="Bruce D."/>
            <person name="Han C."/>
            <person name="Tapia R."/>
            <person name="Gilna P."/>
            <person name="Schmutz J."/>
            <person name="Larimer F."/>
            <person name="Land M."/>
            <person name="Hauser L."/>
            <person name="Kyrpides N."/>
            <person name="Kim E."/>
            <person name="Stahl D."/>
            <person name="Richardson P."/>
        </authorList>
    </citation>
    <scope>NUCLEOTIDE SEQUENCE [LARGE SCALE GENOMIC DNA]</scope>
    <source>
        <strain>JS42</strain>
    </source>
</reference>
<proteinExistence type="inferred from homology"/>
<dbReference type="EC" id="2.5.1.75" evidence="1"/>
<dbReference type="EMBL" id="CP000539">
    <property type="protein sequence ID" value="ABM43236.1"/>
    <property type="molecule type" value="Genomic_DNA"/>
</dbReference>
<dbReference type="SMR" id="A1WAG1"/>
<dbReference type="STRING" id="232721.Ajs_3111"/>
<dbReference type="KEGG" id="ajs:Ajs_3111"/>
<dbReference type="eggNOG" id="COG0324">
    <property type="taxonomic scope" value="Bacteria"/>
</dbReference>
<dbReference type="HOGENOM" id="CLU_032616_0_0_4"/>
<dbReference type="Proteomes" id="UP000000645">
    <property type="component" value="Chromosome"/>
</dbReference>
<dbReference type="GO" id="GO:0005524">
    <property type="term" value="F:ATP binding"/>
    <property type="evidence" value="ECO:0007669"/>
    <property type="project" value="UniProtKB-UniRule"/>
</dbReference>
<dbReference type="GO" id="GO:0052381">
    <property type="term" value="F:tRNA dimethylallyltransferase activity"/>
    <property type="evidence" value="ECO:0007669"/>
    <property type="project" value="UniProtKB-UniRule"/>
</dbReference>
<dbReference type="GO" id="GO:0006400">
    <property type="term" value="P:tRNA modification"/>
    <property type="evidence" value="ECO:0007669"/>
    <property type="project" value="TreeGrafter"/>
</dbReference>
<dbReference type="FunFam" id="1.10.20.140:FF:000001">
    <property type="entry name" value="tRNA dimethylallyltransferase"/>
    <property type="match status" value="1"/>
</dbReference>
<dbReference type="Gene3D" id="1.10.20.140">
    <property type="match status" value="1"/>
</dbReference>
<dbReference type="Gene3D" id="3.40.50.300">
    <property type="entry name" value="P-loop containing nucleotide triphosphate hydrolases"/>
    <property type="match status" value="1"/>
</dbReference>
<dbReference type="HAMAP" id="MF_00185">
    <property type="entry name" value="IPP_trans"/>
    <property type="match status" value="1"/>
</dbReference>
<dbReference type="InterPro" id="IPR039657">
    <property type="entry name" value="Dimethylallyltransferase"/>
</dbReference>
<dbReference type="InterPro" id="IPR018022">
    <property type="entry name" value="IPT"/>
</dbReference>
<dbReference type="InterPro" id="IPR027417">
    <property type="entry name" value="P-loop_NTPase"/>
</dbReference>
<dbReference type="NCBIfam" id="TIGR00174">
    <property type="entry name" value="miaA"/>
    <property type="match status" value="1"/>
</dbReference>
<dbReference type="PANTHER" id="PTHR11088">
    <property type="entry name" value="TRNA DIMETHYLALLYLTRANSFERASE"/>
    <property type="match status" value="1"/>
</dbReference>
<dbReference type="PANTHER" id="PTHR11088:SF60">
    <property type="entry name" value="TRNA DIMETHYLALLYLTRANSFERASE"/>
    <property type="match status" value="1"/>
</dbReference>
<dbReference type="Pfam" id="PF01715">
    <property type="entry name" value="IPPT"/>
    <property type="match status" value="1"/>
</dbReference>
<dbReference type="SUPFAM" id="SSF52540">
    <property type="entry name" value="P-loop containing nucleoside triphosphate hydrolases"/>
    <property type="match status" value="1"/>
</dbReference>
<comment type="function">
    <text evidence="1">Catalyzes the transfer of a dimethylallyl group onto the adenine at position 37 in tRNAs that read codons beginning with uridine, leading to the formation of N6-(dimethylallyl)adenosine (i(6)A).</text>
</comment>
<comment type="catalytic activity">
    <reaction evidence="1">
        <text>adenosine(37) in tRNA + dimethylallyl diphosphate = N(6)-dimethylallyladenosine(37) in tRNA + diphosphate</text>
        <dbReference type="Rhea" id="RHEA:26482"/>
        <dbReference type="Rhea" id="RHEA-COMP:10162"/>
        <dbReference type="Rhea" id="RHEA-COMP:10375"/>
        <dbReference type="ChEBI" id="CHEBI:33019"/>
        <dbReference type="ChEBI" id="CHEBI:57623"/>
        <dbReference type="ChEBI" id="CHEBI:74411"/>
        <dbReference type="ChEBI" id="CHEBI:74415"/>
        <dbReference type="EC" id="2.5.1.75"/>
    </reaction>
</comment>
<comment type="cofactor">
    <cofactor evidence="1">
        <name>Mg(2+)</name>
        <dbReference type="ChEBI" id="CHEBI:18420"/>
    </cofactor>
</comment>
<comment type="subunit">
    <text evidence="1">Monomer.</text>
</comment>
<comment type="similarity">
    <text evidence="1">Belongs to the IPP transferase family.</text>
</comment>
<name>MIAA_ACISJ</name>
<organism>
    <name type="scientific">Acidovorax sp. (strain JS42)</name>
    <dbReference type="NCBI Taxonomy" id="232721"/>
    <lineage>
        <taxon>Bacteria</taxon>
        <taxon>Pseudomonadati</taxon>
        <taxon>Pseudomonadota</taxon>
        <taxon>Betaproteobacteria</taxon>
        <taxon>Burkholderiales</taxon>
        <taxon>Comamonadaceae</taxon>
        <taxon>Acidovorax</taxon>
    </lineage>
</organism>
<gene>
    <name evidence="1" type="primary">miaA</name>
    <name type="ordered locus">Ajs_3111</name>
</gene>
<accession>A1WAG1</accession>
<keyword id="KW-0067">ATP-binding</keyword>
<keyword id="KW-0460">Magnesium</keyword>
<keyword id="KW-0547">Nucleotide-binding</keyword>
<keyword id="KW-0808">Transferase</keyword>
<keyword id="KW-0819">tRNA processing</keyword>
<feature type="chain" id="PRO_0000377048" description="tRNA dimethylallyltransferase">
    <location>
        <begin position="1"/>
        <end position="323"/>
    </location>
</feature>
<feature type="region of interest" description="Interaction with substrate tRNA" evidence="1">
    <location>
        <begin position="42"/>
        <end position="45"/>
    </location>
</feature>
<feature type="region of interest" description="Interaction with substrate tRNA" evidence="1">
    <location>
        <begin position="166"/>
        <end position="170"/>
    </location>
</feature>
<feature type="region of interest" description="Interaction with substrate tRNA" evidence="1">
    <location>
        <begin position="251"/>
        <end position="256"/>
    </location>
</feature>
<feature type="region of interest" description="Interaction with substrate tRNA" evidence="1">
    <location>
        <begin position="284"/>
        <end position="291"/>
    </location>
</feature>
<feature type="binding site" evidence="1">
    <location>
        <begin position="13"/>
        <end position="20"/>
    </location>
    <ligand>
        <name>ATP</name>
        <dbReference type="ChEBI" id="CHEBI:30616"/>
    </ligand>
</feature>
<feature type="binding site" evidence="1">
    <location>
        <begin position="15"/>
        <end position="20"/>
    </location>
    <ligand>
        <name>substrate</name>
    </ligand>
</feature>
<feature type="site" description="Interaction with substrate tRNA" evidence="1">
    <location>
        <position position="108"/>
    </location>
</feature>
<feature type="site" description="Interaction with substrate tRNA" evidence="1">
    <location>
        <position position="130"/>
    </location>
</feature>
<protein>
    <recommendedName>
        <fullName evidence="1">tRNA dimethylallyltransferase</fullName>
        <ecNumber evidence="1">2.5.1.75</ecNumber>
    </recommendedName>
    <alternativeName>
        <fullName evidence="1">Dimethylallyl diphosphate:tRNA dimethylallyltransferase</fullName>
        <shortName evidence="1">DMAPP:tRNA dimethylallyltransferase</shortName>
        <shortName evidence="1">DMATase</shortName>
    </alternativeName>
    <alternativeName>
        <fullName evidence="1">Isopentenyl-diphosphate:tRNA isopentenyltransferase</fullName>
        <shortName evidence="1">IPP transferase</shortName>
        <shortName evidence="1">IPPT</shortName>
        <shortName evidence="1">IPTase</shortName>
    </alternativeName>
</protein>
<evidence type="ECO:0000255" key="1">
    <source>
        <dbReference type="HAMAP-Rule" id="MF_00185"/>
    </source>
</evidence>